<dbReference type="EMBL" id="AB218894">
    <property type="protein sequence ID" value="BAE48303.1"/>
    <property type="molecule type" value="mRNA"/>
</dbReference>
<dbReference type="EMBL" id="AM234746">
    <property type="protein sequence ID" value="CAJ84138.1"/>
    <property type="molecule type" value="mRNA"/>
</dbReference>
<dbReference type="EMBL" id="AL606999">
    <property type="protein sequence ID" value="CAE04846.2"/>
    <property type="molecule type" value="Genomic_DNA"/>
</dbReference>
<dbReference type="EMBL" id="AP014960">
    <property type="protein sequence ID" value="BAS91481.1"/>
    <property type="molecule type" value="Genomic_DNA"/>
</dbReference>
<dbReference type="RefSeq" id="XP_015635371.1">
    <property type="nucleotide sequence ID" value="XM_015779885.1"/>
</dbReference>
<dbReference type="SMR" id="Q7XM13"/>
<dbReference type="FunCoup" id="Q7XM13">
    <property type="interactions" value="42"/>
</dbReference>
<dbReference type="IntAct" id="Q7XM13">
    <property type="interactions" value="1"/>
</dbReference>
<dbReference type="STRING" id="39947.Q7XM13"/>
<dbReference type="PaxDb" id="39947-Q7XM13"/>
<dbReference type="EnsemblPlants" id="Os04t0663600-01">
    <property type="protein sequence ID" value="Os04t0663600-01"/>
    <property type="gene ID" value="Os04g0663600"/>
</dbReference>
<dbReference type="GeneID" id="107275471"/>
<dbReference type="Gramene" id="Os04t0663600-01">
    <property type="protein sequence ID" value="Os04t0663600-01"/>
    <property type="gene ID" value="Os04g0663600"/>
</dbReference>
<dbReference type="KEGG" id="osa:107275471"/>
<dbReference type="eggNOG" id="ENOG502QRYV">
    <property type="taxonomic scope" value="Eukaryota"/>
</dbReference>
<dbReference type="HOGENOM" id="CLU_074227_0_0_1"/>
<dbReference type="InParanoid" id="Q7XM13"/>
<dbReference type="OMA" id="RELYYSC"/>
<dbReference type="OrthoDB" id="773671at2759"/>
<dbReference type="Proteomes" id="UP000000763">
    <property type="component" value="Chromosome 4"/>
</dbReference>
<dbReference type="Proteomes" id="UP000059680">
    <property type="component" value="Chromosome 4"/>
</dbReference>
<dbReference type="GO" id="GO:0005634">
    <property type="term" value="C:nucleus"/>
    <property type="evidence" value="ECO:0000314"/>
    <property type="project" value="UniProtKB"/>
</dbReference>
<dbReference type="GO" id="GO:0003677">
    <property type="term" value="F:DNA binding"/>
    <property type="evidence" value="ECO:0007669"/>
    <property type="project" value="UniProtKB-KW"/>
</dbReference>
<dbReference type="GO" id="GO:0003700">
    <property type="term" value="F:DNA-binding transcription factor activity"/>
    <property type="evidence" value="ECO:0007669"/>
    <property type="project" value="InterPro"/>
</dbReference>
<dbReference type="GO" id="GO:0090506">
    <property type="term" value="P:axillary shoot meristem initiation"/>
    <property type="evidence" value="ECO:0000315"/>
    <property type="project" value="UniProtKB"/>
</dbReference>
<dbReference type="GO" id="GO:0045892">
    <property type="term" value="P:negative regulation of DNA-templated transcription"/>
    <property type="evidence" value="ECO:0000314"/>
    <property type="project" value="UniProtKB"/>
</dbReference>
<dbReference type="GO" id="GO:0099402">
    <property type="term" value="P:plant organ development"/>
    <property type="evidence" value="ECO:0007669"/>
    <property type="project" value="InterPro"/>
</dbReference>
<dbReference type="CDD" id="cd00086">
    <property type="entry name" value="homeodomain"/>
    <property type="match status" value="1"/>
</dbReference>
<dbReference type="FunFam" id="1.10.10.60:FF:000118">
    <property type="entry name" value="WUSCHEL-related homeobox 11"/>
    <property type="match status" value="1"/>
</dbReference>
<dbReference type="Gene3D" id="1.10.10.60">
    <property type="entry name" value="Homeodomain-like"/>
    <property type="match status" value="1"/>
</dbReference>
<dbReference type="InterPro" id="IPR001356">
    <property type="entry name" value="HD"/>
</dbReference>
<dbReference type="InterPro" id="IPR009057">
    <property type="entry name" value="Homeodomain-like_sf"/>
</dbReference>
<dbReference type="InterPro" id="IPR044555">
    <property type="entry name" value="WUSCHEL-like"/>
</dbReference>
<dbReference type="PANTHER" id="PTHR45940:SF2">
    <property type="entry name" value="WUSCHEL-RELATED HOMEOBOX 1"/>
    <property type="match status" value="1"/>
</dbReference>
<dbReference type="PANTHER" id="PTHR45940">
    <property type="entry name" value="WUSCHEL-RELATED HOMEOBOX 1-RELATED"/>
    <property type="match status" value="1"/>
</dbReference>
<dbReference type="Pfam" id="PF00046">
    <property type="entry name" value="Homeodomain"/>
    <property type="match status" value="1"/>
</dbReference>
<dbReference type="SMART" id="SM00389">
    <property type="entry name" value="HOX"/>
    <property type="match status" value="1"/>
</dbReference>
<dbReference type="SUPFAM" id="SSF46689">
    <property type="entry name" value="Homeodomain-like"/>
    <property type="match status" value="1"/>
</dbReference>
<dbReference type="PROSITE" id="PS50071">
    <property type="entry name" value="HOMEOBOX_2"/>
    <property type="match status" value="1"/>
</dbReference>
<name>WOX1_ORYSJ</name>
<gene>
    <name evidence="10" type="primary">WOX1</name>
    <name evidence="11" type="synonym">MOC3</name>
    <name evidence="13" type="synonym">SRT1</name>
    <name evidence="12" type="synonym">TAB1</name>
    <name evidence="9" type="synonym">WUS</name>
    <name evidence="15" type="ordered locus">Os04g0663600</name>
    <name evidence="14" type="ordered locus">LOC_Os04g56780</name>
    <name evidence="16" type="ORF">OSJNBa0084K01.1</name>
</gene>
<proteinExistence type="evidence at protein level"/>
<feature type="chain" id="PRO_0000308632" description="WUSCHEL-related homeobox 1">
    <location>
        <begin position="1"/>
        <end position="289"/>
    </location>
</feature>
<feature type="DNA-binding region" description="Homeobox; WUS-type" evidence="1">
    <location>
        <begin position="31"/>
        <end position="96"/>
    </location>
</feature>
<feature type="region of interest" description="Disordered" evidence="2">
    <location>
        <begin position="1"/>
        <end position="34"/>
    </location>
</feature>
<feature type="compositionally biased region" description="Low complexity" evidence="2">
    <location>
        <begin position="1"/>
        <end position="11"/>
    </location>
</feature>
<feature type="compositionally biased region" description="Gly residues" evidence="2">
    <location>
        <begin position="12"/>
        <end position="25"/>
    </location>
</feature>
<feature type="mutagenesis site" description="In srt1; defects in tiller formation and complete female sterility." evidence="7">
    <location>
        <begin position="79"/>
        <end position="85"/>
    </location>
</feature>
<feature type="sequence conflict" description="In Ref. 1; BAE48303." evidence="14" ref="1">
    <original>VGCAAG</original>
    <variation>GGGADA</variation>
    <location>
        <begin position="177"/>
        <end position="182"/>
    </location>
</feature>
<feature type="sequence conflict" description="In Ref. 1; BAE48303." evidence="14" ref="1">
    <original>VFV</original>
    <variation>GGG</variation>
    <location>
        <begin position="206"/>
        <end position="208"/>
    </location>
</feature>
<feature type="sequence conflict" description="In Ref. 1; BAE48303." evidence="14" ref="1">
    <original>V</original>
    <variation>G</variation>
    <location>
        <position position="218"/>
    </location>
</feature>
<feature type="sequence conflict" description="In Ref. 1; BAE48303." evidence="14" ref="1">
    <original>S</original>
    <variation>T</variation>
    <location>
        <position position="236"/>
    </location>
</feature>
<feature type="sequence conflict" description="In Ref. 2; CAJ84138 and 3; CAE04846." ref="2 3">
    <original>N</original>
    <variation>Y</variation>
    <location>
        <position position="237"/>
    </location>
</feature>
<sequence length="289" mass="30954">MDHMQQQQRQQVGGGGGEEVAGRGGVPVCRPSGTRWTPTTEQIKILRELYYSCGIRSPNSEQIQRIAAMLRQYGRIEGKNVFYWFQNHKARERQKKRLTTLDVTTTTAAAADADASHLAVLSLSPTAAGATAPSFPGFYVGNGGAVQTDQANVVNWDCTAMAAEKTFLQDYMGVSGVGCAAGAAPTPWAMTTTTREPETLPLFPVVFVGGDGAHRHAVHGGFPSNFQRWGSAAATSNTITVQQHLQQHNFYSSSSSQLHSQDGPAAGTSLELTLSSYYCSCSPYPAGSM</sequence>
<keyword id="KW-0217">Developmental protein</keyword>
<keyword id="KW-0238">DNA-binding</keyword>
<keyword id="KW-0371">Homeobox</keyword>
<keyword id="KW-0539">Nucleus</keyword>
<keyword id="KW-1185">Reference proteome</keyword>
<keyword id="KW-0804">Transcription</keyword>
<keyword id="KW-0805">Transcription regulation</keyword>
<organism>
    <name type="scientific">Oryza sativa subsp. japonica</name>
    <name type="common">Rice</name>
    <dbReference type="NCBI Taxonomy" id="39947"/>
    <lineage>
        <taxon>Eukaryota</taxon>
        <taxon>Viridiplantae</taxon>
        <taxon>Streptophyta</taxon>
        <taxon>Embryophyta</taxon>
        <taxon>Tracheophyta</taxon>
        <taxon>Spermatophyta</taxon>
        <taxon>Magnoliopsida</taxon>
        <taxon>Liliopsida</taxon>
        <taxon>Poales</taxon>
        <taxon>Poaceae</taxon>
        <taxon>BOP clade</taxon>
        <taxon>Oryzoideae</taxon>
        <taxon>Oryzeae</taxon>
        <taxon>Oryzinae</taxon>
        <taxon>Oryza</taxon>
        <taxon>Oryza sativa</taxon>
    </lineage>
</organism>
<accession>Q7XM13</accession>
<accession>A0A0N7KJV6</accession>
<accession>A0AAS7</accession>
<accession>A3AYC1</accession>
<accession>Q33DK0</accession>
<evidence type="ECO:0000255" key="1">
    <source>
        <dbReference type="PROSITE-ProRule" id="PRU00108"/>
    </source>
</evidence>
<evidence type="ECO:0000256" key="2">
    <source>
        <dbReference type="SAM" id="MobiDB-lite"/>
    </source>
</evidence>
<evidence type="ECO:0000269" key="3">
    <source>
    </source>
</evidence>
<evidence type="ECO:0000269" key="4">
    <source>
    </source>
</evidence>
<evidence type="ECO:0000269" key="5">
    <source>
    </source>
</evidence>
<evidence type="ECO:0000269" key="6">
    <source>
    </source>
</evidence>
<evidence type="ECO:0000269" key="7">
    <source>
    </source>
</evidence>
<evidence type="ECO:0000303" key="8">
    <source>
    </source>
</evidence>
<evidence type="ECO:0000303" key="9">
    <source>
    </source>
</evidence>
<evidence type="ECO:0000303" key="10">
    <source>
    </source>
</evidence>
<evidence type="ECO:0000303" key="11">
    <source>
    </source>
</evidence>
<evidence type="ECO:0000303" key="12">
    <source>
    </source>
</evidence>
<evidence type="ECO:0000303" key="13">
    <source>
    </source>
</evidence>
<evidence type="ECO:0000305" key="14"/>
<evidence type="ECO:0000312" key="15">
    <source>
        <dbReference type="EMBL" id="BAS91481.1"/>
    </source>
</evidence>
<evidence type="ECO:0000312" key="16">
    <source>
        <dbReference type="EMBL" id="CAE04846.2"/>
    </source>
</evidence>
<comment type="function">
    <text evidence="5 6 7">Transcription repressor required for the formation and development of tiller buds and panicles (PubMed:25697101). Required for tiller formation and female sterility (PubMed:27194802). Required for the early developmental stages of axillary meristem formation (PubMed:25841039). Plays a role in maintaining the axillary premeristem zone and in promoting the formation of the axillary meristem by promoting OSH1 expression (PubMed:25841039). Does not seem to be involved in maintenance of the shoot apical meristem (SAM) (PubMed:25841039).</text>
</comment>
<comment type="subunit">
    <text evidence="5">Interacts with TPR1, TPR2 and TPR3.</text>
</comment>
<comment type="interaction">
    <interactant intactId="EBI-1100547">
        <id>Q7XM13</id>
    </interactant>
    <interactant intactId="EBI-1100563">
        <id>Q33DK1</id>
        <label>WOX3</label>
    </interactant>
    <organismsDiffer>false</organismsDiffer>
    <experiments>3</experiments>
</comment>
<comment type="subcellular location">
    <subcellularLocation>
        <location evidence="1 5">Nucleus</location>
    </subcellularLocation>
</comment>
<comment type="tissue specificity">
    <text evidence="3">Expressed in young leaf primordia. Expressed in branch an floral meristems. Transiently expressed in the shoot apex.</text>
</comment>
<comment type="induction">
    <text evidence="4">Induced by the cytokinin 6-benzylaminopurine.</text>
</comment>
<comment type="disruption phenotype">
    <text evidence="5 6">Disrupted formation of tiller buds, and female sterility (PubMed:25697101). Defects in axillary bud formation, and partial defects in branching of the panicle (PubMed:25841039).</text>
</comment>
<comment type="similarity">
    <text evidence="14">Belongs to the WUS homeobox family.</text>
</comment>
<reference key="1">
    <citation type="journal article" date="2005" name="Genes Genet. Syst.">
        <title>Members of TALE and WUS subfamilies of homeodomain proteins with potentially important functions in development form dimers within each subfamily in rice.</title>
        <authorList>
            <person name="Nagasaki H."/>
            <person name="Matsuoka M."/>
            <person name="Sato Y."/>
        </authorList>
    </citation>
    <scope>NUCLEOTIDE SEQUENCE [MRNA]</scope>
    <scope>TISSUE SPECIFICITY</scope>
    <source>
        <strain>cv. Taichung 65</strain>
        <tissue>Flower</tissue>
    </source>
</reference>
<reference key="2">
    <citation type="journal article" date="2006" name="Mol. Biol. Evol.">
        <title>The shoot stem cell niche in angiosperms: expression patterns of WUS orthologues in rice and maize imply major modifications in the course of mono- and dicot evolution.</title>
        <authorList>
            <person name="Nardmann J."/>
            <person name="Werr W."/>
        </authorList>
    </citation>
    <scope>NUCLEOTIDE SEQUENCE [MRNA]</scope>
</reference>
<reference key="3">
    <citation type="journal article" date="2002" name="Nature">
        <title>Sequence and analysis of rice chromosome 4.</title>
        <authorList>
            <person name="Feng Q."/>
            <person name="Zhang Y."/>
            <person name="Hao P."/>
            <person name="Wang S."/>
            <person name="Fu G."/>
            <person name="Huang Y."/>
            <person name="Li Y."/>
            <person name="Zhu J."/>
            <person name="Liu Y."/>
            <person name="Hu X."/>
            <person name="Jia P."/>
            <person name="Zhang Y."/>
            <person name="Zhao Q."/>
            <person name="Ying K."/>
            <person name="Yu S."/>
            <person name="Tang Y."/>
            <person name="Weng Q."/>
            <person name="Zhang L."/>
            <person name="Lu Y."/>
            <person name="Mu J."/>
            <person name="Lu Y."/>
            <person name="Zhang L.S."/>
            <person name="Yu Z."/>
            <person name="Fan D."/>
            <person name="Liu X."/>
            <person name="Lu T."/>
            <person name="Li C."/>
            <person name="Wu Y."/>
            <person name="Sun T."/>
            <person name="Lei H."/>
            <person name="Li T."/>
            <person name="Hu H."/>
            <person name="Guan J."/>
            <person name="Wu M."/>
            <person name="Zhang R."/>
            <person name="Zhou B."/>
            <person name="Chen Z."/>
            <person name="Chen L."/>
            <person name="Jin Z."/>
            <person name="Wang R."/>
            <person name="Yin H."/>
            <person name="Cai Z."/>
            <person name="Ren S."/>
            <person name="Lv G."/>
            <person name="Gu W."/>
            <person name="Zhu G."/>
            <person name="Tu Y."/>
            <person name="Jia J."/>
            <person name="Zhang Y."/>
            <person name="Chen J."/>
            <person name="Kang H."/>
            <person name="Chen X."/>
            <person name="Shao C."/>
            <person name="Sun Y."/>
            <person name="Hu Q."/>
            <person name="Zhang X."/>
            <person name="Zhang W."/>
            <person name="Wang L."/>
            <person name="Ding C."/>
            <person name="Sheng H."/>
            <person name="Gu J."/>
            <person name="Chen S."/>
            <person name="Ni L."/>
            <person name="Zhu F."/>
            <person name="Chen W."/>
            <person name="Lan L."/>
            <person name="Lai Y."/>
            <person name="Cheng Z."/>
            <person name="Gu M."/>
            <person name="Jiang J."/>
            <person name="Li J."/>
            <person name="Hong G."/>
            <person name="Xue Y."/>
            <person name="Han B."/>
        </authorList>
    </citation>
    <scope>NUCLEOTIDE SEQUENCE [LARGE SCALE GENOMIC DNA]</scope>
    <source>
        <strain>cv. Nipponbare</strain>
    </source>
</reference>
<reference key="4">
    <citation type="journal article" date="2005" name="Nature">
        <title>The map-based sequence of the rice genome.</title>
        <authorList>
            <consortium name="International rice genome sequencing project (IRGSP)"/>
        </authorList>
    </citation>
    <scope>NUCLEOTIDE SEQUENCE [LARGE SCALE GENOMIC DNA]</scope>
    <source>
        <strain>cv. Nipponbare</strain>
    </source>
</reference>
<reference key="5">
    <citation type="journal article" date="2013" name="Rice">
        <title>Improvement of the Oryza sativa Nipponbare reference genome using next generation sequence and optical map data.</title>
        <authorList>
            <person name="Kawahara Y."/>
            <person name="de la Bastide M."/>
            <person name="Hamilton J.P."/>
            <person name="Kanamori H."/>
            <person name="McCombie W.R."/>
            <person name="Ouyang S."/>
            <person name="Schwartz D.C."/>
            <person name="Tanaka T."/>
            <person name="Wu J."/>
            <person name="Zhou S."/>
            <person name="Childs K.L."/>
            <person name="Davidson R.M."/>
            <person name="Lin H."/>
            <person name="Quesada-Ocampo L."/>
            <person name="Vaillancourt B."/>
            <person name="Sakai H."/>
            <person name="Lee S.S."/>
            <person name="Kim J."/>
            <person name="Numa H."/>
            <person name="Itoh T."/>
            <person name="Buell C.R."/>
            <person name="Matsumoto T."/>
        </authorList>
    </citation>
    <scope>GENOME REANNOTATION</scope>
    <source>
        <strain>cv. Nipponbare</strain>
    </source>
</reference>
<reference key="6">
    <citation type="journal article" date="2007" name="Plant Physiol.">
        <title>A WUSCHEL-LIKE HOMEOBOX gene represses a YABBY gene expression required for rice leaf development.</title>
        <authorList>
            <person name="Dai M."/>
            <person name="Hu Y."/>
            <person name="Zhao Y."/>
            <person name="Liu H."/>
            <person name="Zhou D.-X."/>
        </authorList>
    </citation>
    <scope>GENE FAMILY</scope>
    <scope>NOMENCLATURE</scope>
</reference>
<reference key="7">
    <citation type="journal article" date="2015" name="J. Genet. Genomics">
        <title>MONOCULM 3, an ortholog of WUSCHEL in rice, is required for tiller bud formation.</title>
        <authorList>
            <person name="Lu Z."/>
            <person name="Shao G."/>
            <person name="Xiong J."/>
            <person name="Jiao Y."/>
            <person name="Wang J."/>
            <person name="Liu G."/>
            <person name="Meng X."/>
            <person name="Liang Y."/>
            <person name="Xiong G."/>
            <person name="Wang Y."/>
            <person name="Li J."/>
        </authorList>
    </citation>
    <scope>FUNCTION</scope>
    <scope>INTERACTION WITH TPR1; TPR2 AND TPR3</scope>
    <scope>SUBCELLULAR LOCATION</scope>
    <scope>INDUCTION BY CYTOKININ</scope>
    <scope>DISRUPTION PHENOTYPE</scope>
</reference>
<reference key="8">
    <citation type="journal article" date="2015" name="Plant Cell">
        <title>Axillary meristem formation in rice requires the WUSCHEL ortholog TILLERS ABSENT1.</title>
        <authorList>
            <person name="Tanaka W."/>
            <person name="Ohmori Y."/>
            <person name="Ushijima T."/>
            <person name="Matsusaka H."/>
            <person name="Matsushita T."/>
            <person name="Kumamaru T."/>
            <person name="Kawano S."/>
            <person name="Hirano H.Y."/>
        </authorList>
    </citation>
    <scope>FUNCTION</scope>
    <scope>DISRUPTION PHENOTYPE</scope>
</reference>
<reference key="9">
    <citation type="journal article" date="2016" name="G3 (Bethesda)">
        <title>Homeobox is pivotal for OsWUS controlling tiller development and female fertility in rice.</title>
        <authorList>
            <person name="Mjomba F.M."/>
            <person name="Zheng Y."/>
            <person name="Liu H."/>
            <person name="Tang W."/>
            <person name="Hong Z."/>
            <person name="Wang F."/>
            <person name="Wu W."/>
        </authorList>
    </citation>
    <scope>FUNCTION</scope>
    <scope>MUTAGENESIS OF 79-LYS--PHE-85</scope>
</reference>
<protein>
    <recommendedName>
        <fullName evidence="14">WUSCHEL-related homeobox 1</fullName>
        <shortName evidence="10">OsWOX1</shortName>
    </recommendedName>
    <alternativeName>
        <fullName evidence="11">Protein MONOCULM 3</fullName>
    </alternativeName>
    <alternativeName>
        <fullName evidence="13">Protein STERILE AND REDUCED TILLERING 1</fullName>
    </alternativeName>
    <alternativeName>
        <fullName evidence="12">Protein TILLERS ABSENT 1</fullName>
    </alternativeName>
    <alternativeName>
        <fullName evidence="9">Protein WUS</fullName>
        <shortName evidence="8">OsWUS</shortName>
    </alternativeName>
</protein>